<sequence>MIYPDEAMLYAPVEWHDCSEGFEDIRYEKSTDGIAKITINRPQVRNAFRPLTVKEMIQALADARYDDNIGVIILTGAGDKAFCSGGDQKVRGDYGGYKDDSGVHHLNVLDFQRQIRTCPKPVVAMVAGYSIGGGHVLHMMCDLTIAADNAIFGQTGPKVGSFDGGWGASYMARIVGQKKAREIWFLCRQYDAKQALDMGLVNTVVPLADLEKETVRWCREMLQNSPMALRCLKAALNADCDGQAGLQELAGNATMLFYMTEEGQEGRNAFNQKRQPDFSKFKRNP</sequence>
<name>MENB_ECOLI</name>
<protein>
    <recommendedName>
        <fullName evidence="1 7">1,4-dihydroxy-2-naphthoyl-CoA synthase</fullName>
        <shortName evidence="1 8">DHNA-CoA synthase</shortName>
        <ecNumber evidence="1 3 4 5 6">4.1.3.36</ecNumber>
    </recommendedName>
</protein>
<gene>
    <name evidence="1" type="primary">menB</name>
    <name type="ordered locus">b2262</name>
    <name type="ordered locus">JW2257</name>
</gene>
<proteinExistence type="evidence at protein level"/>
<accession>P0ABU0</accession>
<accession>P27290</accession>
<reference key="1">
    <citation type="journal article" date="1992" name="J. Bacteriol.">
        <title>Menaquinone (vitamin K2) biosynthesis: nucleotide sequence and expression of the menB gene from Escherichia coli.</title>
        <authorList>
            <person name="Sharma V."/>
            <person name="Suvarna K."/>
            <person name="Meganathan R."/>
            <person name="Hudspeth M.E."/>
        </authorList>
    </citation>
    <scope>NUCLEOTIDE SEQUENCE [GENOMIC DNA]</scope>
    <source>
        <strain>K12</strain>
    </source>
</reference>
<reference key="2">
    <citation type="journal article" date="1997" name="DNA Res.">
        <title>Construction of a contiguous 874-kb sequence of the Escherichia coli-K12 genome corresponding to 50.0-68.8 min on the linkage map and analysis of its sequence features.</title>
        <authorList>
            <person name="Yamamoto Y."/>
            <person name="Aiba H."/>
            <person name="Baba T."/>
            <person name="Hayashi K."/>
            <person name="Inada T."/>
            <person name="Isono K."/>
            <person name="Itoh T."/>
            <person name="Kimura S."/>
            <person name="Kitagawa M."/>
            <person name="Makino K."/>
            <person name="Miki T."/>
            <person name="Mitsuhashi N."/>
            <person name="Mizobuchi K."/>
            <person name="Mori H."/>
            <person name="Nakade S."/>
            <person name="Nakamura Y."/>
            <person name="Nashimoto H."/>
            <person name="Oshima T."/>
            <person name="Oyama S."/>
            <person name="Saito N."/>
            <person name="Sampei G."/>
            <person name="Satoh Y."/>
            <person name="Sivasundaram S."/>
            <person name="Tagami H."/>
            <person name="Takahashi H."/>
            <person name="Takeda J."/>
            <person name="Takemoto K."/>
            <person name="Uehara K."/>
            <person name="Wada C."/>
            <person name="Yamagata S."/>
            <person name="Horiuchi T."/>
        </authorList>
    </citation>
    <scope>NUCLEOTIDE SEQUENCE [LARGE SCALE GENOMIC DNA]</scope>
    <source>
        <strain>K12 / W3110 / ATCC 27325 / DSM 5911</strain>
    </source>
</reference>
<reference key="3">
    <citation type="journal article" date="1997" name="Science">
        <title>The complete genome sequence of Escherichia coli K-12.</title>
        <authorList>
            <person name="Blattner F.R."/>
            <person name="Plunkett G. III"/>
            <person name="Bloch C.A."/>
            <person name="Perna N.T."/>
            <person name="Burland V."/>
            <person name="Riley M."/>
            <person name="Collado-Vides J."/>
            <person name="Glasner J.D."/>
            <person name="Rode C.K."/>
            <person name="Mayhew G.F."/>
            <person name="Gregor J."/>
            <person name="Davis N.W."/>
            <person name="Kirkpatrick H.A."/>
            <person name="Goeden M.A."/>
            <person name="Rose D.J."/>
            <person name="Mau B."/>
            <person name="Shao Y."/>
        </authorList>
    </citation>
    <scope>NUCLEOTIDE SEQUENCE [LARGE SCALE GENOMIC DNA]</scope>
    <source>
        <strain>K12 / MG1655 / ATCC 47076</strain>
    </source>
</reference>
<reference key="4">
    <citation type="journal article" date="2006" name="Mol. Syst. Biol.">
        <title>Highly accurate genome sequences of Escherichia coli K-12 strains MG1655 and W3110.</title>
        <authorList>
            <person name="Hayashi K."/>
            <person name="Morooka N."/>
            <person name="Yamamoto Y."/>
            <person name="Fujita K."/>
            <person name="Isono K."/>
            <person name="Choi S."/>
            <person name="Ohtsubo E."/>
            <person name="Baba T."/>
            <person name="Wanner B.L."/>
            <person name="Mori H."/>
            <person name="Horiuchi T."/>
        </authorList>
    </citation>
    <scope>NUCLEOTIDE SEQUENCE [LARGE SCALE GENOMIC DNA]</scope>
    <source>
        <strain>K12 / W3110 / ATCC 27325 / DSM 5911</strain>
    </source>
</reference>
<reference key="5">
    <citation type="submission" date="1994-07" db="EMBL/GenBank/DDBJ databases">
        <authorList>
            <person name="Sharma V."/>
            <person name="Hudspeth M.E."/>
            <person name="Meganathan R."/>
        </authorList>
    </citation>
    <scope>NUCLEOTIDE SEQUENCE [GENOMIC DNA] OF 1-6</scope>
    <source>
        <strain>K12</strain>
    </source>
</reference>
<reference key="6">
    <citation type="journal article" date="1975" name="Biochemistry">
        <title>Biosynthesis of bacterial menaquinones. Menaquinone mutants of Escherichia coli.</title>
        <authorList>
            <person name="Young I.G."/>
        </authorList>
    </citation>
    <scope>FUNCTION IN MENAQUINONE BIOSYNTHESIS</scope>
</reference>
<reference key="7">
    <citation type="journal article" date="2010" name="J. Biol. Chem.">
        <title>A bicarbonate cofactor modulates 1,4-dihydroxy-2-naphthoyl-coenzyme a synthase in menaquinone biosynthesis of Escherichia coli.</title>
        <authorList>
            <person name="Jiang M."/>
            <person name="Chen M."/>
            <person name="Guo Z.F."/>
            <person name="Guo Z."/>
        </authorList>
    </citation>
    <scope>FUNCTION AS A DHNA-COA SYNTHASE</scope>
    <scope>CATALYTIC ACTIVITY</scope>
    <scope>MUTAGENESIS OF GLN-154; GLY-156 AND TRP-184</scope>
    <scope>COFACTOR</scope>
    <scope>ACTIVITY REGULATION</scope>
    <scope>SUBUNIT</scope>
</reference>
<reference key="8">
    <citation type="journal article" date="2011" name="Biochemistry">
        <title>Mechanism of the intramolecular Claisen condensation reaction catalyzed by MenB, a crotonase superfamily member.</title>
        <authorList>
            <person name="Li H.J."/>
            <person name="Li X."/>
            <person name="Liu N."/>
            <person name="Zhang H."/>
            <person name="Truglio J.J."/>
            <person name="Mishra S."/>
            <person name="Kisker C."/>
            <person name="Garcia-Diaz M."/>
            <person name="Tonge P.J."/>
        </authorList>
    </citation>
    <scope>X-RAY CRYSTALLOGRAPHY (1.95 ANGSTROMS) IN COMPLEX WITH THE SUBSTRATE ANALOG O-SUCCINYLBENZOYL-N-COENZYME A</scope>
    <scope>CATALYTIC ACTIVITY</scope>
    <scope>FUNCTION</scope>
    <scope>SUBUNIT</scope>
    <scope>BIOPHYSICOCHEMICAL PROPERTIES</scope>
    <scope>MUTAGENESIS OF TYR-97 AND GLY-156</scope>
</reference>
<reference key="9">
    <citation type="journal article" date="2012" name="Biochemistry">
        <title>Active site binding and catalytic role of bicarbonate in 1,4-dihydroxy-2-naphthoyl coenzyme A synthases from vitamin K biosynthetic pathways.</title>
        <authorList>
            <person name="Sun Y."/>
            <person name="Song H."/>
            <person name="Li J."/>
            <person name="Jiang M."/>
            <person name="Li Y."/>
            <person name="Zhou J."/>
            <person name="Guo Z."/>
        </authorList>
    </citation>
    <scope>X-RAY CRYSTALLOGRAPHY (2.19 ANGSTROMS) IN COMPLEX WITH HYDROGENCARBONATE</scope>
    <scope>CATALYTIC ACTIVITY</scope>
    <scope>COFACTOR</scope>
    <scope>SUBUNIT</scope>
</reference>
<reference key="10">
    <citation type="journal article" date="2013" name="PLoS ONE">
        <title>Structural basis of the induced-fit mechanism of 1,4-dihydroxy-2-naphthoyl coenzyme A synthase from the crotonase fold superfamily.</title>
        <authorList>
            <person name="Sun Y."/>
            <person name="Song H."/>
            <person name="Li J."/>
            <person name="Li Y."/>
            <person name="Jiang M."/>
            <person name="Zhou J."/>
            <person name="Guo Z."/>
        </authorList>
    </citation>
    <scope>X-RAY CRYSTALLOGRAPHY (1.85 ANGSTROMS) IN COMPLEX WITH THE SUBSTRATE ANALOG 1-HYDROXY-2-NAPHTHOYL-COA</scope>
    <scope>FUNCTION</scope>
    <scope>CATALYTIC ACTIVITY</scope>
    <scope>COFACTOR</scope>
    <scope>SUBUNIT</scope>
    <scope>MUTAGENESIS OF LYS-89; ARG-91; ARG-267; PHE-270 AND LYS-273</scope>
    <scope>BIOPHYSICOCHEMICAL PROPERTIES</scope>
</reference>
<evidence type="ECO:0000255" key="1">
    <source>
        <dbReference type="HAMAP-Rule" id="MF_01934"/>
    </source>
</evidence>
<evidence type="ECO:0000269" key="2">
    <source>
    </source>
</evidence>
<evidence type="ECO:0000269" key="3">
    <source>
    </source>
</evidence>
<evidence type="ECO:0000269" key="4">
    <source>
    </source>
</evidence>
<evidence type="ECO:0000269" key="5">
    <source>
    </source>
</evidence>
<evidence type="ECO:0000269" key="6">
    <source>
    </source>
</evidence>
<evidence type="ECO:0000303" key="7">
    <source>
    </source>
</evidence>
<evidence type="ECO:0000303" key="8">
    <source>
    </source>
</evidence>
<evidence type="ECO:0000305" key="9">
    <source>
    </source>
</evidence>
<evidence type="ECO:0000305" key="10">
    <source>
    </source>
</evidence>
<evidence type="ECO:0007829" key="11">
    <source>
        <dbReference type="PDB" id="3T88"/>
    </source>
</evidence>
<evidence type="ECO:0007829" key="12">
    <source>
        <dbReference type="PDB" id="4ELX"/>
    </source>
</evidence>
<evidence type="ECO:0007829" key="13">
    <source>
        <dbReference type="PDB" id="4I42"/>
    </source>
</evidence>
<dbReference type="EC" id="4.1.3.36" evidence="1 3 4 5 6"/>
<dbReference type="EMBL" id="M93421">
    <property type="protein sequence ID" value="AAA23682.1"/>
    <property type="molecule type" value="Genomic_DNA"/>
</dbReference>
<dbReference type="EMBL" id="U00096">
    <property type="protein sequence ID" value="AAC75322.1"/>
    <property type="molecule type" value="Genomic_DNA"/>
</dbReference>
<dbReference type="EMBL" id="AP009048">
    <property type="protein sequence ID" value="BAA16086.1"/>
    <property type="molecule type" value="Genomic_DNA"/>
</dbReference>
<dbReference type="EMBL" id="L35030">
    <property type="protein sequence ID" value="AAA24152.1"/>
    <property type="molecule type" value="Genomic_DNA"/>
</dbReference>
<dbReference type="PIR" id="A42714">
    <property type="entry name" value="D64997"/>
</dbReference>
<dbReference type="RefSeq" id="NP_416765.1">
    <property type="nucleotide sequence ID" value="NC_000913.3"/>
</dbReference>
<dbReference type="RefSeq" id="WP_000639996.1">
    <property type="nucleotide sequence ID" value="NZ_STEB01000008.1"/>
</dbReference>
<dbReference type="PDB" id="3T88">
    <property type="method" value="X-ray"/>
    <property type="resolution" value="2.00 A"/>
    <property type="chains" value="A/B/C/D/E/F=1-285"/>
</dbReference>
<dbReference type="PDB" id="3T89">
    <property type="method" value="X-ray"/>
    <property type="resolution" value="1.95 A"/>
    <property type="chains" value="A/B/C/D/E/F=1-285"/>
</dbReference>
<dbReference type="PDB" id="4ELS">
    <property type="method" value="X-ray"/>
    <property type="resolution" value="2.30 A"/>
    <property type="chains" value="A/B/C/D/E/F=1-285"/>
</dbReference>
<dbReference type="PDB" id="4ELW">
    <property type="method" value="X-ray"/>
    <property type="resolution" value="2.55 A"/>
    <property type="chains" value="A/B/C/D/E/F=1-285"/>
</dbReference>
<dbReference type="PDB" id="4ELX">
    <property type="method" value="X-ray"/>
    <property type="resolution" value="2.19 A"/>
    <property type="chains" value="A/B/C/D/E/F=1-285"/>
</dbReference>
<dbReference type="PDB" id="4I42">
    <property type="method" value="X-ray"/>
    <property type="resolution" value="1.85 A"/>
    <property type="chains" value="A/B/C/D/E/F/G/H/I/J/K/L=1-285"/>
</dbReference>
<dbReference type="PDBsum" id="3T88"/>
<dbReference type="PDBsum" id="3T89"/>
<dbReference type="PDBsum" id="4ELS"/>
<dbReference type="PDBsum" id="4ELW"/>
<dbReference type="PDBsum" id="4ELX"/>
<dbReference type="PDBsum" id="4I42"/>
<dbReference type="SMR" id="P0ABU0"/>
<dbReference type="BioGRID" id="4260504">
    <property type="interactions" value="22"/>
</dbReference>
<dbReference type="BioGRID" id="851088">
    <property type="interactions" value="1"/>
</dbReference>
<dbReference type="DIP" id="DIP-47854N"/>
<dbReference type="FunCoup" id="P0ABU0">
    <property type="interactions" value="502"/>
</dbReference>
<dbReference type="IntAct" id="P0ABU0">
    <property type="interactions" value="6"/>
</dbReference>
<dbReference type="STRING" id="511145.b2262"/>
<dbReference type="jPOST" id="P0ABU0"/>
<dbReference type="PaxDb" id="511145-b2262"/>
<dbReference type="EnsemblBacteria" id="AAC75322">
    <property type="protein sequence ID" value="AAC75322"/>
    <property type="gene ID" value="b2262"/>
</dbReference>
<dbReference type="GeneID" id="75205687"/>
<dbReference type="GeneID" id="946747"/>
<dbReference type="KEGG" id="ecj:JW2257"/>
<dbReference type="KEGG" id="eco:b2262"/>
<dbReference type="KEGG" id="ecoc:C3026_12635"/>
<dbReference type="PATRIC" id="fig|511145.12.peg.2355"/>
<dbReference type="EchoBASE" id="EB1342"/>
<dbReference type="eggNOG" id="COG0447">
    <property type="taxonomic scope" value="Bacteria"/>
</dbReference>
<dbReference type="HOGENOM" id="CLU_009834_7_7_6"/>
<dbReference type="InParanoid" id="P0ABU0"/>
<dbReference type="OMA" id="FCDARED"/>
<dbReference type="OrthoDB" id="9807606at2"/>
<dbReference type="PhylomeDB" id="P0ABU0"/>
<dbReference type="BioCyc" id="EcoCyc:NAPHTHOATE-SYN-MONOMER"/>
<dbReference type="BioCyc" id="MetaCyc:NAPHTHOATE-SYN-MONOMER"/>
<dbReference type="UniPathway" id="UPA00079"/>
<dbReference type="UniPathway" id="UPA01057">
    <property type="reaction ID" value="UER00167"/>
</dbReference>
<dbReference type="EvolutionaryTrace" id="P0ABU0"/>
<dbReference type="PRO" id="PR:P0ABU0"/>
<dbReference type="Proteomes" id="UP000000625">
    <property type="component" value="Chromosome"/>
</dbReference>
<dbReference type="GO" id="GO:0005829">
    <property type="term" value="C:cytosol"/>
    <property type="evidence" value="ECO:0000314"/>
    <property type="project" value="EcoCyc"/>
</dbReference>
<dbReference type="GO" id="GO:0008935">
    <property type="term" value="F:1,4-dihydroxy-2-naphthoyl-CoA synthase activity"/>
    <property type="evidence" value="ECO:0000314"/>
    <property type="project" value="EcoliWiki"/>
</dbReference>
<dbReference type="GO" id="GO:0071890">
    <property type="term" value="F:bicarbonate binding"/>
    <property type="evidence" value="ECO:0000314"/>
    <property type="project" value="UniProtKB"/>
</dbReference>
<dbReference type="GO" id="GO:0009234">
    <property type="term" value="P:menaquinone biosynthetic process"/>
    <property type="evidence" value="ECO:0000315"/>
    <property type="project" value="EcoCyc"/>
</dbReference>
<dbReference type="CDD" id="cd06558">
    <property type="entry name" value="crotonase-like"/>
    <property type="match status" value="1"/>
</dbReference>
<dbReference type="FunFam" id="1.10.12.10:FF:000002">
    <property type="entry name" value="1,4-dihydroxy-2-naphthoyl-CoA synthase"/>
    <property type="match status" value="1"/>
</dbReference>
<dbReference type="FunFam" id="3.90.226.10:FF:000003">
    <property type="entry name" value="1,4-dihydroxy-2-naphthoyl-CoA synthase"/>
    <property type="match status" value="1"/>
</dbReference>
<dbReference type="Gene3D" id="3.90.226.10">
    <property type="entry name" value="2-enoyl-CoA Hydratase, Chain A, domain 1"/>
    <property type="match status" value="1"/>
</dbReference>
<dbReference type="Gene3D" id="1.10.12.10">
    <property type="entry name" value="Lyase 2-enoyl-coa Hydratase, Chain A, domain 2"/>
    <property type="match status" value="1"/>
</dbReference>
<dbReference type="HAMAP" id="MF_01934">
    <property type="entry name" value="MenB"/>
    <property type="match status" value="1"/>
</dbReference>
<dbReference type="InterPro" id="IPR029045">
    <property type="entry name" value="ClpP/crotonase-like_dom_sf"/>
</dbReference>
<dbReference type="InterPro" id="IPR010198">
    <property type="entry name" value="DHNA-CoA_synthase_MenB"/>
</dbReference>
<dbReference type="InterPro" id="IPR018376">
    <property type="entry name" value="Enoyl-CoA_hyd/isom_CS"/>
</dbReference>
<dbReference type="InterPro" id="IPR001753">
    <property type="entry name" value="Enoyl-CoA_hydra/iso"/>
</dbReference>
<dbReference type="InterPro" id="IPR014748">
    <property type="entry name" value="Enoyl-CoA_hydra_C"/>
</dbReference>
<dbReference type="NCBIfam" id="TIGR01929">
    <property type="entry name" value="menB"/>
    <property type="match status" value="1"/>
</dbReference>
<dbReference type="NCBIfam" id="NF005637">
    <property type="entry name" value="PRK07396.1"/>
    <property type="match status" value="1"/>
</dbReference>
<dbReference type="PANTHER" id="PTHR43113:SF1">
    <property type="entry name" value="1,4-DIHYDROXY-2-NAPHTHOYL-COA SYNTHASE, PEROXISOMAL"/>
    <property type="match status" value="1"/>
</dbReference>
<dbReference type="PANTHER" id="PTHR43113">
    <property type="entry name" value="NUCLEOSIDE-DIPHOSPHATE-SUGAR EPIMERASE"/>
    <property type="match status" value="1"/>
</dbReference>
<dbReference type="Pfam" id="PF00378">
    <property type="entry name" value="ECH_1"/>
    <property type="match status" value="1"/>
</dbReference>
<dbReference type="SUPFAM" id="SSF52096">
    <property type="entry name" value="ClpP/crotonase"/>
    <property type="match status" value="1"/>
</dbReference>
<dbReference type="PROSITE" id="PS00166">
    <property type="entry name" value="ENOYL_COA_HYDRATASE"/>
    <property type="match status" value="1"/>
</dbReference>
<feature type="chain" id="PRO_0000109325" description="1,4-dihydroxy-2-naphthoyl-CoA synthase">
    <location>
        <begin position="1"/>
        <end position="285"/>
    </location>
</feature>
<feature type="binding site" description="in other chain" evidence="1 4 6">
    <location>
        <position position="45"/>
    </location>
    <ligand>
        <name>substrate</name>
        <note>ligand shared between two neighboring subunits</note>
    </ligand>
</feature>
<feature type="binding site" description="in other chain" evidence="4 6">
    <location>
        <begin position="84"/>
        <end position="89"/>
    </location>
    <ligand>
        <name>substrate</name>
        <note>ligand shared between two neighboring subunits</note>
    </ligand>
</feature>
<feature type="binding site" description="in other chain" evidence="1 4">
    <location>
        <position position="97"/>
    </location>
    <ligand>
        <name>substrate</name>
        <note>ligand shared between two neighboring subunits</note>
    </ligand>
</feature>
<feature type="binding site" description="in other chain" evidence="1 4 6">
    <location>
        <begin position="129"/>
        <end position="133"/>
    </location>
    <ligand>
        <name>substrate</name>
        <note>ligand shared between two neighboring subunits</note>
    </ligand>
</feature>
<feature type="binding site" evidence="1 5">
    <location>
        <begin position="154"/>
        <end position="156"/>
    </location>
    <ligand>
        <name>hydrogencarbonate</name>
        <dbReference type="ChEBI" id="CHEBI:17544"/>
    </ligand>
</feature>
<feature type="binding site" description="in other chain" evidence="1 4 6">
    <location>
        <position position="155"/>
    </location>
    <ligand>
        <name>substrate</name>
        <note>ligand shared between two neighboring subunits</note>
    </ligand>
</feature>
<feature type="binding site" description="in other chain" evidence="1 6">
    <location>
        <position position="161"/>
    </location>
    <ligand>
        <name>substrate</name>
        <note>ligand shared between two neighboring subunits</note>
    </ligand>
</feature>
<feature type="binding site" evidence="1 4">
    <location>
        <position position="258"/>
    </location>
    <ligand>
        <name>substrate</name>
        <note>ligand shared between two neighboring subunits</note>
    </ligand>
</feature>
<feature type="binding site" evidence="1 4 6">
    <location>
        <position position="273"/>
    </location>
    <ligand>
        <name>substrate</name>
        <note>ligand shared between two neighboring subunits</note>
    </ligand>
</feature>
<feature type="site" description="Important for catalysis" evidence="1 9">
    <location>
        <position position="97"/>
    </location>
</feature>
<feature type="site" description="Important for catalysis" evidence="1 9">
    <location>
        <position position="258"/>
    </location>
</feature>
<feature type="mutagenesis site" description="Strongly decreases affinity for substrate and DHNA-CoA synthase activity." evidence="6">
    <original>K</original>
    <variation>A</variation>
    <location>
        <position position="89"/>
    </location>
</feature>
<feature type="mutagenesis site" description="Loss of DHNA-CoA synthase activity." evidence="6">
    <original>R</original>
    <variation>A</variation>
    <location>
        <position position="91"/>
    </location>
</feature>
<feature type="mutagenesis site" description="Loss of DHNA-CoA synthase activity." evidence="4">
    <original>Y</original>
    <variation>F</variation>
    <location>
        <position position="97"/>
    </location>
</feature>
<feature type="mutagenesis site" description="Reduces the specific DHNA-CoA synthase activity by 15-fold, whereas its affinity for hydrogencarbonate is reduced by 36-fold." evidence="3">
    <original>Q</original>
    <variation>A</variation>
    <location>
        <position position="154"/>
    </location>
</feature>
<feature type="mutagenesis site" description="Loss of DHNA-CoA synthase activity." evidence="3 4">
    <original>G</original>
    <variation>D</variation>
    <location>
        <position position="156"/>
    </location>
</feature>
<feature type="mutagenesis site" description="Reduces the specific DHNA-CoA synthase activity by 530-fold, whereas its affinity for hydrogencarbonate is reduced by 20-fold." evidence="3">
    <original>W</original>
    <variation>F</variation>
    <location>
        <position position="184"/>
    </location>
</feature>
<feature type="mutagenesis site" description="Strongly decreases affinity for substrate and DHNA-CoA synthase activity." evidence="6">
    <original>R</original>
    <variation>A</variation>
    <location>
        <position position="267"/>
    </location>
</feature>
<feature type="mutagenesis site" description="Strongly decreases affinity for substrate and DHNA-CoA synthase activity." evidence="6">
    <original>F</original>
    <variation>A</variation>
    <location>
        <position position="270"/>
    </location>
</feature>
<feature type="mutagenesis site" description="Impairs protein folding." evidence="6">
    <original>K</original>
    <variation>A</variation>
    <location>
        <position position="273"/>
    </location>
</feature>
<feature type="helix" evidence="13">
    <location>
        <begin position="6"/>
        <end position="9"/>
    </location>
</feature>
<feature type="strand" evidence="13">
    <location>
        <begin position="15"/>
        <end position="17"/>
    </location>
</feature>
<feature type="strand" evidence="13">
    <location>
        <begin position="23"/>
        <end position="30"/>
    </location>
</feature>
<feature type="strand" evidence="13">
    <location>
        <begin position="33"/>
        <end position="39"/>
    </location>
</feature>
<feature type="helix" evidence="13">
    <location>
        <begin position="42"/>
        <end position="44"/>
    </location>
</feature>
<feature type="helix" evidence="13">
    <location>
        <begin position="50"/>
        <end position="65"/>
    </location>
</feature>
<feature type="strand" evidence="13">
    <location>
        <begin position="71"/>
        <end position="83"/>
    </location>
</feature>
<feature type="helix" evidence="13">
    <location>
        <begin position="88"/>
        <end position="90"/>
    </location>
</feature>
<feature type="strand" evidence="13">
    <location>
        <begin position="93"/>
        <end position="98"/>
    </location>
</feature>
<feature type="turn" evidence="12">
    <location>
        <begin position="105"/>
        <end position="107"/>
    </location>
</feature>
<feature type="helix" evidence="13">
    <location>
        <begin position="108"/>
        <end position="117"/>
    </location>
</feature>
<feature type="strand" evidence="13">
    <location>
        <begin position="122"/>
        <end position="126"/>
    </location>
</feature>
<feature type="strand" evidence="13">
    <location>
        <begin position="128"/>
        <end position="131"/>
    </location>
</feature>
<feature type="helix" evidence="13">
    <location>
        <begin position="133"/>
        <end position="140"/>
    </location>
</feature>
<feature type="strand" evidence="13">
    <location>
        <begin position="141"/>
        <end position="147"/>
    </location>
</feature>
<feature type="strand" evidence="13">
    <location>
        <begin position="151"/>
        <end position="153"/>
    </location>
</feature>
<feature type="helix" evidence="13">
    <location>
        <begin position="156"/>
        <end position="159"/>
    </location>
</feature>
<feature type="turn" evidence="13">
    <location>
        <begin position="166"/>
        <end position="168"/>
    </location>
</feature>
<feature type="helix" evidence="13">
    <location>
        <begin position="169"/>
        <end position="175"/>
    </location>
</feature>
<feature type="helix" evidence="13">
    <location>
        <begin position="177"/>
        <end position="186"/>
    </location>
</feature>
<feature type="helix" evidence="13">
    <location>
        <begin position="192"/>
        <end position="197"/>
    </location>
</feature>
<feature type="strand" evidence="13">
    <location>
        <begin position="200"/>
        <end position="205"/>
    </location>
</feature>
<feature type="helix" evidence="13">
    <location>
        <begin position="207"/>
        <end position="209"/>
    </location>
</feature>
<feature type="helix" evidence="13">
    <location>
        <begin position="210"/>
        <end position="222"/>
    </location>
</feature>
<feature type="helix" evidence="13">
    <location>
        <begin position="226"/>
        <end position="238"/>
    </location>
</feature>
<feature type="helix" evidence="13">
    <location>
        <begin position="242"/>
        <end position="258"/>
    </location>
</feature>
<feature type="helix" evidence="13">
    <location>
        <begin position="261"/>
        <end position="271"/>
    </location>
</feature>
<feature type="helix" evidence="11">
    <location>
        <begin position="278"/>
        <end position="280"/>
    </location>
</feature>
<comment type="function">
    <text evidence="1 2 3 4 6">Converts o-succinylbenzoyl-CoA (OSB-CoA) to 1,4-dihydroxy-2-naphthoyl-CoA (DHNA-CoA).</text>
</comment>
<comment type="catalytic activity">
    <reaction evidence="1 3 4 5 6">
        <text>2-succinylbenzoyl-CoA + H(+) = 1,4-dihydroxy-2-naphthoyl-CoA + H2O</text>
        <dbReference type="Rhea" id="RHEA:26562"/>
        <dbReference type="ChEBI" id="CHEBI:15377"/>
        <dbReference type="ChEBI" id="CHEBI:15378"/>
        <dbReference type="ChEBI" id="CHEBI:57364"/>
        <dbReference type="ChEBI" id="CHEBI:58897"/>
        <dbReference type="EC" id="4.1.3.36"/>
    </reaction>
</comment>
<comment type="cofactor">
    <cofactor evidence="1 3 10">
        <name>hydrogencarbonate</name>
        <dbReference type="ChEBI" id="CHEBI:17544"/>
    </cofactor>
    <text evidence="3 10">The hydrogencarbonate anion plays the same catalytic role (proton acceptor) as the side-chain carboxylate group of the essential 'Asp-185' found in actinobacteria, archaea, bacteroidetes, and deltaproteobacteria.</text>
</comment>
<comment type="activity regulation">
    <text evidence="3">Inhibited by sulfite and nitrate.</text>
</comment>
<comment type="biophysicochemical properties">
    <kinetics>
        <KM evidence="4">26 uM for o-succinylbenzoyl-CoA</KM>
        <KM evidence="6">2.8 uM for o-succinylbenzoyl-CoA</KM>
        <text evidence="4 6">kcat is 620 sec(-1) with o-succinylbenzoyl-CoA as substrate (PubMed:21830810). kcat is 1.24 min(-1) with o-succinylbenzoyl-CoA as substrate (PubMed:23658663). All assays are performed at pH 7.0 at 25 degrees Celsius and in the presence of 20 mM NaHCO(3).</text>
    </kinetics>
</comment>
<comment type="pathway">
    <text evidence="1">Quinol/quinone metabolism; 1,4-dihydroxy-2-naphthoate biosynthesis; 1,4-dihydroxy-2-naphthoate from chorismate: step 6/7.</text>
</comment>
<comment type="pathway">
    <text evidence="1">Quinol/quinone metabolism; menaquinone biosynthesis.</text>
</comment>
<comment type="subunit">
    <text evidence="3 4 5 6">Homohexamer. Dimer of a homotrimer.</text>
</comment>
<comment type="interaction">
    <interactant intactId="EBI-554195">
        <id>P0ABU0</id>
    </interactant>
    <interactant intactId="EBI-543760">
        <id>P67910</id>
        <label>hldD</label>
    </interactant>
    <organismsDiffer>false</organismsDiffer>
    <experiments>3</experiments>
</comment>
<comment type="similarity">
    <text evidence="1">Belongs to the enoyl-CoA hydratase/isomerase family. MenB subfamily.</text>
</comment>
<keyword id="KW-0002">3D-structure</keyword>
<keyword id="KW-0456">Lyase</keyword>
<keyword id="KW-0474">Menaquinone biosynthesis</keyword>
<keyword id="KW-1185">Reference proteome</keyword>
<organism>
    <name type="scientific">Escherichia coli (strain K12)</name>
    <dbReference type="NCBI Taxonomy" id="83333"/>
    <lineage>
        <taxon>Bacteria</taxon>
        <taxon>Pseudomonadati</taxon>
        <taxon>Pseudomonadota</taxon>
        <taxon>Gammaproteobacteria</taxon>
        <taxon>Enterobacterales</taxon>
        <taxon>Enterobacteriaceae</taxon>
        <taxon>Escherichia</taxon>
    </lineage>
</organism>